<organism>
    <name type="scientific">Nitrosococcus oceani (strain ATCC 19707 / BCRC 17464 / JCM 30415 / NCIMB 11848 / C-107)</name>
    <dbReference type="NCBI Taxonomy" id="323261"/>
    <lineage>
        <taxon>Bacteria</taxon>
        <taxon>Pseudomonadati</taxon>
        <taxon>Pseudomonadota</taxon>
        <taxon>Gammaproteobacteria</taxon>
        <taxon>Chromatiales</taxon>
        <taxon>Chromatiaceae</taxon>
        <taxon>Nitrosococcus</taxon>
    </lineage>
</organism>
<reference key="1">
    <citation type="journal article" date="2006" name="Appl. Environ. Microbiol.">
        <title>Complete genome sequence of the marine, chemolithoautotrophic, ammonia-oxidizing bacterium Nitrosococcus oceani ATCC 19707.</title>
        <authorList>
            <person name="Klotz M.G."/>
            <person name="Arp D.J."/>
            <person name="Chain P.S.G."/>
            <person name="El-Sheikh A.F."/>
            <person name="Hauser L.J."/>
            <person name="Hommes N.G."/>
            <person name="Larimer F.W."/>
            <person name="Malfatti S.A."/>
            <person name="Norton J.M."/>
            <person name="Poret-Peterson A.T."/>
            <person name="Vergez L.M."/>
            <person name="Ward B.B."/>
        </authorList>
    </citation>
    <scope>NUCLEOTIDE SEQUENCE [LARGE SCALE GENOMIC DNA]</scope>
    <source>
        <strain>ATCC 19707 / BCRC 17464 / JCM 30415 / NCIMB 11848 / C-107</strain>
    </source>
</reference>
<feature type="chain" id="PRO_1000018239" description="Tryptophan synthase alpha chain">
    <location>
        <begin position="1"/>
        <end position="271"/>
    </location>
</feature>
<feature type="active site" description="Proton acceptor" evidence="1">
    <location>
        <position position="49"/>
    </location>
</feature>
<feature type="active site" description="Proton acceptor" evidence="1">
    <location>
        <position position="60"/>
    </location>
</feature>
<evidence type="ECO:0000255" key="1">
    <source>
        <dbReference type="HAMAP-Rule" id="MF_00131"/>
    </source>
</evidence>
<sequence>MSRITERFTVLRGQGRKALVPYITAGDPQPQVTVPLMHAMVAAGADILELGVPFSDPMADGPVIQKACERALAAGTSLLDVLAMVAEFRRKDQETPVILMGYLNPIEILGYRSFAEQAAAHGVDGLLTVDMPPEEAEPLAAVCKEQGLDRIFLLAPTSSPKRIEQISALGSGFIYYVSLKGVTGASTLDVDDVSQRVAKIRHYTTMPVGVGFGIRDARSAAQIASIADAAVVGSALVKRIEQYQNRPEVIPEEVSALLRTMREAIDATENV</sequence>
<protein>
    <recommendedName>
        <fullName evidence="1">Tryptophan synthase alpha chain</fullName>
        <ecNumber evidence="1">4.2.1.20</ecNumber>
    </recommendedName>
</protein>
<proteinExistence type="inferred from homology"/>
<name>TRPA_NITOC</name>
<gene>
    <name evidence="1" type="primary">trpA</name>
    <name type="ordered locus">Noc_1021</name>
</gene>
<dbReference type="EC" id="4.2.1.20" evidence="1"/>
<dbReference type="EMBL" id="CP000127">
    <property type="protein sequence ID" value="ABA57529.1"/>
    <property type="molecule type" value="Genomic_DNA"/>
</dbReference>
<dbReference type="RefSeq" id="WP_002808920.1">
    <property type="nucleotide sequence ID" value="NC_007484.1"/>
</dbReference>
<dbReference type="SMR" id="Q3JCB7"/>
<dbReference type="FunCoup" id="Q3JCB7">
    <property type="interactions" value="543"/>
</dbReference>
<dbReference type="STRING" id="323261.Noc_1021"/>
<dbReference type="KEGG" id="noc:Noc_1021"/>
<dbReference type="eggNOG" id="COG0159">
    <property type="taxonomic scope" value="Bacteria"/>
</dbReference>
<dbReference type="HOGENOM" id="CLU_016734_0_0_6"/>
<dbReference type="InParanoid" id="Q3JCB7"/>
<dbReference type="UniPathway" id="UPA00035">
    <property type="reaction ID" value="UER00044"/>
</dbReference>
<dbReference type="Proteomes" id="UP000006838">
    <property type="component" value="Chromosome"/>
</dbReference>
<dbReference type="GO" id="GO:0005829">
    <property type="term" value="C:cytosol"/>
    <property type="evidence" value="ECO:0007669"/>
    <property type="project" value="TreeGrafter"/>
</dbReference>
<dbReference type="GO" id="GO:0004834">
    <property type="term" value="F:tryptophan synthase activity"/>
    <property type="evidence" value="ECO:0007669"/>
    <property type="project" value="UniProtKB-UniRule"/>
</dbReference>
<dbReference type="CDD" id="cd04724">
    <property type="entry name" value="Tryptophan_synthase_alpha"/>
    <property type="match status" value="1"/>
</dbReference>
<dbReference type="FunFam" id="3.20.20.70:FF:000037">
    <property type="entry name" value="Tryptophan synthase alpha chain"/>
    <property type="match status" value="1"/>
</dbReference>
<dbReference type="Gene3D" id="3.20.20.70">
    <property type="entry name" value="Aldolase class I"/>
    <property type="match status" value="1"/>
</dbReference>
<dbReference type="HAMAP" id="MF_00131">
    <property type="entry name" value="Trp_synth_alpha"/>
    <property type="match status" value="1"/>
</dbReference>
<dbReference type="InterPro" id="IPR013785">
    <property type="entry name" value="Aldolase_TIM"/>
</dbReference>
<dbReference type="InterPro" id="IPR011060">
    <property type="entry name" value="RibuloseP-bd_barrel"/>
</dbReference>
<dbReference type="InterPro" id="IPR018204">
    <property type="entry name" value="Trp_synthase_alpha_AS"/>
</dbReference>
<dbReference type="InterPro" id="IPR002028">
    <property type="entry name" value="Trp_synthase_suA"/>
</dbReference>
<dbReference type="NCBIfam" id="TIGR00262">
    <property type="entry name" value="trpA"/>
    <property type="match status" value="1"/>
</dbReference>
<dbReference type="PANTHER" id="PTHR43406:SF1">
    <property type="entry name" value="TRYPTOPHAN SYNTHASE ALPHA CHAIN, CHLOROPLASTIC"/>
    <property type="match status" value="1"/>
</dbReference>
<dbReference type="PANTHER" id="PTHR43406">
    <property type="entry name" value="TRYPTOPHAN SYNTHASE, ALPHA CHAIN"/>
    <property type="match status" value="1"/>
</dbReference>
<dbReference type="Pfam" id="PF00290">
    <property type="entry name" value="Trp_syntA"/>
    <property type="match status" value="1"/>
</dbReference>
<dbReference type="SUPFAM" id="SSF51366">
    <property type="entry name" value="Ribulose-phoshate binding barrel"/>
    <property type="match status" value="1"/>
</dbReference>
<dbReference type="PROSITE" id="PS00167">
    <property type="entry name" value="TRP_SYNTHASE_ALPHA"/>
    <property type="match status" value="1"/>
</dbReference>
<accession>Q3JCB7</accession>
<comment type="function">
    <text evidence="1">The alpha subunit is responsible for the aldol cleavage of indoleglycerol phosphate to indole and glyceraldehyde 3-phosphate.</text>
</comment>
<comment type="catalytic activity">
    <reaction evidence="1">
        <text>(1S,2R)-1-C-(indol-3-yl)glycerol 3-phosphate + L-serine = D-glyceraldehyde 3-phosphate + L-tryptophan + H2O</text>
        <dbReference type="Rhea" id="RHEA:10532"/>
        <dbReference type="ChEBI" id="CHEBI:15377"/>
        <dbReference type="ChEBI" id="CHEBI:33384"/>
        <dbReference type="ChEBI" id="CHEBI:57912"/>
        <dbReference type="ChEBI" id="CHEBI:58866"/>
        <dbReference type="ChEBI" id="CHEBI:59776"/>
        <dbReference type="EC" id="4.2.1.20"/>
    </reaction>
</comment>
<comment type="pathway">
    <text evidence="1">Amino-acid biosynthesis; L-tryptophan biosynthesis; L-tryptophan from chorismate: step 5/5.</text>
</comment>
<comment type="subunit">
    <text evidence="1">Tetramer of two alpha and two beta chains.</text>
</comment>
<comment type="similarity">
    <text evidence="1">Belongs to the TrpA family.</text>
</comment>
<keyword id="KW-0028">Amino-acid biosynthesis</keyword>
<keyword id="KW-0057">Aromatic amino acid biosynthesis</keyword>
<keyword id="KW-0456">Lyase</keyword>
<keyword id="KW-1185">Reference proteome</keyword>
<keyword id="KW-0822">Tryptophan biosynthesis</keyword>